<comment type="subcellular location">
    <subcellularLocation>
        <location evidence="1">Cell inner membrane</location>
        <topology evidence="1">Multi-pass membrane protein</topology>
    </subcellularLocation>
</comment>
<comment type="similarity">
    <text evidence="1">Belongs to the UPF0060 family.</text>
</comment>
<accession>Q1GY68</accession>
<protein>
    <recommendedName>
        <fullName evidence="1">UPF0060 membrane protein Mfla_2554</fullName>
    </recommendedName>
</protein>
<reference key="1">
    <citation type="submission" date="2006-03" db="EMBL/GenBank/DDBJ databases">
        <title>Complete sequence of Methylobacillus flagellatus KT.</title>
        <authorList>
            <consortium name="US DOE Joint Genome Institute"/>
            <person name="Copeland A."/>
            <person name="Lucas S."/>
            <person name="Lapidus A."/>
            <person name="Barry K."/>
            <person name="Detter J.C."/>
            <person name="Glavina del Rio T."/>
            <person name="Hammon N."/>
            <person name="Israni S."/>
            <person name="Dalin E."/>
            <person name="Tice H."/>
            <person name="Pitluck S."/>
            <person name="Brettin T."/>
            <person name="Bruce D."/>
            <person name="Han C."/>
            <person name="Tapia R."/>
            <person name="Saunders E."/>
            <person name="Gilna P."/>
            <person name="Schmutz J."/>
            <person name="Larimer F."/>
            <person name="Land M."/>
            <person name="Kyrpides N."/>
            <person name="Anderson I."/>
            <person name="Richardson P."/>
        </authorList>
    </citation>
    <scope>NUCLEOTIDE SEQUENCE [LARGE SCALE GENOMIC DNA]</scope>
    <source>
        <strain>ATCC 51484 / DSM 6875 / VKM B-1610 / KT</strain>
    </source>
</reference>
<name>Y2554_METFK</name>
<organism>
    <name type="scientific">Methylobacillus flagellatus (strain ATCC 51484 / DSM 6875 / VKM B-1610 / KT)</name>
    <dbReference type="NCBI Taxonomy" id="265072"/>
    <lineage>
        <taxon>Bacteria</taxon>
        <taxon>Pseudomonadati</taxon>
        <taxon>Pseudomonadota</taxon>
        <taxon>Betaproteobacteria</taxon>
        <taxon>Nitrosomonadales</taxon>
        <taxon>Methylophilaceae</taxon>
        <taxon>Methylobacillus</taxon>
    </lineage>
</organism>
<gene>
    <name type="ordered locus">Mfla_2554</name>
</gene>
<dbReference type="EMBL" id="CP000284">
    <property type="protein sequence ID" value="ABE50819.1"/>
    <property type="molecule type" value="Genomic_DNA"/>
</dbReference>
<dbReference type="RefSeq" id="WP_011480772.1">
    <property type="nucleotide sequence ID" value="NC_007947.1"/>
</dbReference>
<dbReference type="SMR" id="Q1GY68"/>
<dbReference type="KEGG" id="mfa:Mfla_2554"/>
<dbReference type="eggNOG" id="COG1742">
    <property type="taxonomic scope" value="Bacteria"/>
</dbReference>
<dbReference type="HOGENOM" id="CLU_117653_2_0_4"/>
<dbReference type="OrthoDB" id="123240at2"/>
<dbReference type="Proteomes" id="UP000002440">
    <property type="component" value="Chromosome"/>
</dbReference>
<dbReference type="GO" id="GO:0005886">
    <property type="term" value="C:plasma membrane"/>
    <property type="evidence" value="ECO:0007669"/>
    <property type="project" value="UniProtKB-SubCell"/>
</dbReference>
<dbReference type="HAMAP" id="MF_00010">
    <property type="entry name" value="UPF0060"/>
    <property type="match status" value="1"/>
</dbReference>
<dbReference type="InterPro" id="IPR003844">
    <property type="entry name" value="UPF0060"/>
</dbReference>
<dbReference type="NCBIfam" id="NF002586">
    <property type="entry name" value="PRK02237.1"/>
    <property type="match status" value="1"/>
</dbReference>
<dbReference type="PANTHER" id="PTHR36116">
    <property type="entry name" value="UPF0060 MEMBRANE PROTEIN YNFA"/>
    <property type="match status" value="1"/>
</dbReference>
<dbReference type="PANTHER" id="PTHR36116:SF1">
    <property type="entry name" value="UPF0060 MEMBRANE PROTEIN YNFA"/>
    <property type="match status" value="1"/>
</dbReference>
<dbReference type="Pfam" id="PF02694">
    <property type="entry name" value="UPF0060"/>
    <property type="match status" value="1"/>
</dbReference>
<dbReference type="SUPFAM" id="SSF103481">
    <property type="entry name" value="Multidrug resistance efflux transporter EmrE"/>
    <property type="match status" value="1"/>
</dbReference>
<feature type="chain" id="PRO_0000282231" description="UPF0060 membrane protein Mfla_2554">
    <location>
        <begin position="1"/>
        <end position="110"/>
    </location>
</feature>
<feature type="transmembrane region" description="Helical" evidence="1">
    <location>
        <begin position="7"/>
        <end position="27"/>
    </location>
</feature>
<feature type="transmembrane region" description="Helical" evidence="1">
    <location>
        <begin position="33"/>
        <end position="53"/>
    </location>
</feature>
<feature type="transmembrane region" description="Helical" evidence="1">
    <location>
        <begin position="61"/>
        <end position="81"/>
    </location>
</feature>
<feature type="transmembrane region" description="Helical" evidence="1">
    <location>
        <begin position="83"/>
        <end position="103"/>
    </location>
</feature>
<proteinExistence type="inferred from homology"/>
<keyword id="KW-0997">Cell inner membrane</keyword>
<keyword id="KW-1003">Cell membrane</keyword>
<keyword id="KW-0472">Membrane</keyword>
<keyword id="KW-1185">Reference proteome</keyword>
<keyword id="KW-0812">Transmembrane</keyword>
<keyword id="KW-1133">Transmembrane helix</keyword>
<sequence length="110" mass="12136">MFELKTVALFVITALAEIIGCYLPYLWLNQNKSPLLLIPAAISLALFAWLLTLHPSAAGRVYAAYGGVYIFVAIFWLWVVDDIIPSNWDFLGASVALLGMAIIMFAPRST</sequence>
<evidence type="ECO:0000255" key="1">
    <source>
        <dbReference type="HAMAP-Rule" id="MF_00010"/>
    </source>
</evidence>